<reference key="1">
    <citation type="journal article" date="2008" name="Genome Biol.">
        <title>Encapsulated in silica: genome, proteome and physiology of the thermophilic bacterium Anoxybacillus flavithermus WK1.</title>
        <authorList>
            <person name="Saw J.H."/>
            <person name="Mountain B.W."/>
            <person name="Feng L."/>
            <person name="Omelchenko M.V."/>
            <person name="Hou S."/>
            <person name="Saito J.A."/>
            <person name="Stott M.B."/>
            <person name="Li D."/>
            <person name="Zhao G."/>
            <person name="Wu J."/>
            <person name="Galperin M.Y."/>
            <person name="Koonin E.V."/>
            <person name="Makarova K.S."/>
            <person name="Wolf Y.I."/>
            <person name="Rigden D.J."/>
            <person name="Dunfield P.F."/>
            <person name="Wang L."/>
            <person name="Alam M."/>
        </authorList>
    </citation>
    <scope>NUCLEOTIDE SEQUENCE [LARGE SCALE GENOMIC DNA]</scope>
    <source>
        <strain>DSM 21510 / WK1</strain>
    </source>
</reference>
<feature type="chain" id="PRO_1000197580" description="UPF0122 protein Aflv_1766">
    <location>
        <begin position="1"/>
        <end position="110"/>
    </location>
</feature>
<dbReference type="EMBL" id="CP000922">
    <property type="protein sequence ID" value="ACJ34127.1"/>
    <property type="molecule type" value="Genomic_DNA"/>
</dbReference>
<dbReference type="RefSeq" id="WP_012575328.1">
    <property type="nucleotide sequence ID" value="NC_011567.1"/>
</dbReference>
<dbReference type="SMR" id="B7GGE5"/>
<dbReference type="STRING" id="491915.Aflv_1766"/>
<dbReference type="GeneID" id="7038019"/>
<dbReference type="KEGG" id="afl:Aflv_1766"/>
<dbReference type="PATRIC" id="fig|491915.6.peg.1815"/>
<dbReference type="eggNOG" id="COG2739">
    <property type="taxonomic scope" value="Bacteria"/>
</dbReference>
<dbReference type="HOGENOM" id="CLU_129218_1_0_9"/>
<dbReference type="Proteomes" id="UP000000742">
    <property type="component" value="Chromosome"/>
</dbReference>
<dbReference type="Gene3D" id="1.10.10.10">
    <property type="entry name" value="Winged helix-like DNA-binding domain superfamily/Winged helix DNA-binding domain"/>
    <property type="match status" value="1"/>
</dbReference>
<dbReference type="HAMAP" id="MF_00245">
    <property type="entry name" value="UPF0122"/>
    <property type="match status" value="1"/>
</dbReference>
<dbReference type="InterPro" id="IPR013324">
    <property type="entry name" value="RNA_pol_sigma_r3/r4-like"/>
</dbReference>
<dbReference type="InterPro" id="IPR007394">
    <property type="entry name" value="UPF0122"/>
</dbReference>
<dbReference type="InterPro" id="IPR054831">
    <property type="entry name" value="UPF0122_fam_protein"/>
</dbReference>
<dbReference type="InterPro" id="IPR036388">
    <property type="entry name" value="WH-like_DNA-bd_sf"/>
</dbReference>
<dbReference type="NCBIfam" id="NF001068">
    <property type="entry name" value="PRK00118.1-4"/>
    <property type="match status" value="1"/>
</dbReference>
<dbReference type="NCBIfam" id="NF001070">
    <property type="entry name" value="PRK00118.1-6"/>
    <property type="match status" value="1"/>
</dbReference>
<dbReference type="NCBIfam" id="NF045758">
    <property type="entry name" value="YlxM"/>
    <property type="match status" value="1"/>
</dbReference>
<dbReference type="PANTHER" id="PTHR40083">
    <property type="entry name" value="UPF0122 PROTEIN CBO2450/CLC_2298"/>
    <property type="match status" value="1"/>
</dbReference>
<dbReference type="PANTHER" id="PTHR40083:SF1">
    <property type="entry name" value="UPF0122 PROTEIN YLXM"/>
    <property type="match status" value="1"/>
</dbReference>
<dbReference type="Pfam" id="PF04297">
    <property type="entry name" value="UPF0122"/>
    <property type="match status" value="1"/>
</dbReference>
<dbReference type="SUPFAM" id="SSF88659">
    <property type="entry name" value="Sigma3 and sigma4 domains of RNA polymerase sigma factors"/>
    <property type="match status" value="1"/>
</dbReference>
<accession>B7GGE5</accession>
<evidence type="ECO:0000255" key="1">
    <source>
        <dbReference type="HAMAP-Rule" id="MF_00245"/>
    </source>
</evidence>
<name>Y1766_ANOFW</name>
<comment type="function">
    <text evidence="1">Might take part in the signal recognition particle (SRP) pathway. This is inferred from the conservation of its genetic proximity to ftsY/ffh. May be a regulatory protein.</text>
</comment>
<comment type="similarity">
    <text evidence="1">Belongs to the UPF0122 family.</text>
</comment>
<organism>
    <name type="scientific">Anoxybacillus flavithermus (strain DSM 21510 / WK1)</name>
    <dbReference type="NCBI Taxonomy" id="491915"/>
    <lineage>
        <taxon>Bacteria</taxon>
        <taxon>Bacillati</taxon>
        <taxon>Bacillota</taxon>
        <taxon>Bacilli</taxon>
        <taxon>Bacillales</taxon>
        <taxon>Anoxybacillaceae</taxon>
        <taxon>Anoxybacillus</taxon>
    </lineage>
</organism>
<protein>
    <recommendedName>
        <fullName evidence="1">UPF0122 protein Aflv_1766</fullName>
    </recommendedName>
</protein>
<sequence length="110" mass="13597">MLEKTTRMNYLYDFYQSLLTPKQRNYMSLYYLDDYSLGEIAEEYEVSRQAVYDNIKRTEAMLEDYEQKLLLFQKFQQRHKLLHRLKTHIAERYPNDEELMKLVLELEKLE</sequence>
<gene>
    <name type="ordered locus">Aflv_1766</name>
</gene>
<proteinExistence type="inferred from homology"/>